<protein>
    <recommendedName>
        <fullName evidence="1">Probable sugar efflux transporter</fullName>
    </recommendedName>
</protein>
<keyword id="KW-0997">Cell inner membrane</keyword>
<keyword id="KW-1003">Cell membrane</keyword>
<keyword id="KW-0472">Membrane</keyword>
<keyword id="KW-1185">Reference proteome</keyword>
<keyword id="KW-0762">Sugar transport</keyword>
<keyword id="KW-0812">Transmembrane</keyword>
<keyword id="KW-1133">Transmembrane helix</keyword>
<keyword id="KW-0813">Transport</keyword>
<sequence length="394" mass="42133">MQTTPVSRKTAWLRVLMLAIAAFIFNTTEFVPVGLLSDIGSSFSMQTAQVGLMLTIYAWVVALMSLPMMLLTRNVERRMLLMIIFVMFVASHALSSVAWDFTTLLISRIGIALSHAIFWSITASLAIRVAPQGKKTQALSMMATGTALAMVLGLPIGRMIGQLLGWRITFAVIGAVAFVTMLLLLKLLPKLPSEHTGSLKSVPMLFRRPALVALYLLIAITVTAHYTAYSYIEPFIQSVAGLSGGFTTFLLLIFGAAGIVGSVLFSIYGNKFPATFLLAAIGLITLSMMCLYVSATHTLAVSTLCVIWGIAVMVMGLAVQVRVLALAPDATDVAMSLLSGIYNIGIGAGALLGGQVSLHLNMASVGYVGGAIGILSLLWCAWSMKRHPQLRLNG</sequence>
<reference key="1">
    <citation type="journal article" date="2008" name="Environ. Microbiol.">
        <title>The genome of Erwinia tasmaniensis strain Et1/99, a non-pathogenic bacterium in the genus Erwinia.</title>
        <authorList>
            <person name="Kube M."/>
            <person name="Migdoll A.M."/>
            <person name="Mueller I."/>
            <person name="Kuhl H."/>
            <person name="Beck A."/>
            <person name="Reinhardt R."/>
            <person name="Geider K."/>
        </authorList>
    </citation>
    <scope>NUCLEOTIDE SEQUENCE [LARGE SCALE GENOMIC DNA]</scope>
    <source>
        <strain>DSM 17950 / CFBP 7177 / CIP 109463 / NCPPB 4357 / Et1/99</strain>
    </source>
</reference>
<feature type="chain" id="PRO_1000127462" description="Probable sugar efflux transporter">
    <location>
        <begin position="1"/>
        <end position="394"/>
    </location>
</feature>
<feature type="transmembrane region" description="Helical" evidence="1">
    <location>
        <begin position="15"/>
        <end position="35"/>
    </location>
</feature>
<feature type="transmembrane region" description="Helical" evidence="1">
    <location>
        <begin position="50"/>
        <end position="70"/>
    </location>
</feature>
<feature type="transmembrane region" description="Helical" evidence="1">
    <location>
        <begin position="79"/>
        <end position="99"/>
    </location>
</feature>
<feature type="transmembrane region" description="Helical" evidence="1">
    <location>
        <begin position="109"/>
        <end position="129"/>
    </location>
</feature>
<feature type="transmembrane region" description="Helical" evidence="1">
    <location>
        <begin position="137"/>
        <end position="157"/>
    </location>
</feature>
<feature type="transmembrane region" description="Helical" evidence="1">
    <location>
        <begin position="168"/>
        <end position="188"/>
    </location>
</feature>
<feature type="transmembrane region" description="Helical" evidence="1">
    <location>
        <begin position="209"/>
        <end position="229"/>
    </location>
</feature>
<feature type="transmembrane region" description="Helical" evidence="1">
    <location>
        <begin position="249"/>
        <end position="269"/>
    </location>
</feature>
<feature type="transmembrane region" description="Helical" evidence="1">
    <location>
        <begin position="272"/>
        <end position="292"/>
    </location>
</feature>
<feature type="transmembrane region" description="Helical" evidence="1">
    <location>
        <begin position="299"/>
        <end position="319"/>
    </location>
</feature>
<feature type="transmembrane region" description="Helical" evidence="1">
    <location>
        <begin position="333"/>
        <end position="353"/>
    </location>
</feature>
<feature type="transmembrane region" description="Helical" evidence="1">
    <location>
        <begin position="362"/>
        <end position="382"/>
    </location>
</feature>
<name>SOTB_ERWT9</name>
<gene>
    <name evidence="1" type="primary">sotB</name>
    <name type="ordered locus">ETA_16970</name>
</gene>
<comment type="function">
    <text evidence="1">Involved in the efflux of sugars. The physiological role may be the reduction of the intracellular concentration of toxic sugars or sugar metabolites.</text>
</comment>
<comment type="subcellular location">
    <subcellularLocation>
        <location evidence="1">Cell inner membrane</location>
        <topology evidence="1">Multi-pass membrane protein</topology>
    </subcellularLocation>
</comment>
<comment type="similarity">
    <text evidence="1">Belongs to the major facilitator superfamily. SotB (TC 2.A.1.2) family.</text>
</comment>
<evidence type="ECO:0000255" key="1">
    <source>
        <dbReference type="HAMAP-Rule" id="MF_00517"/>
    </source>
</evidence>
<dbReference type="EMBL" id="CU468135">
    <property type="protein sequence ID" value="CAO96743.1"/>
    <property type="molecule type" value="Genomic_DNA"/>
</dbReference>
<dbReference type="RefSeq" id="WP_012441436.1">
    <property type="nucleotide sequence ID" value="NC_010694.1"/>
</dbReference>
<dbReference type="SMR" id="B2VKI2"/>
<dbReference type="STRING" id="465817.ETA_16970"/>
<dbReference type="KEGG" id="eta:ETA_16970"/>
<dbReference type="eggNOG" id="COG2814">
    <property type="taxonomic scope" value="Bacteria"/>
</dbReference>
<dbReference type="HOGENOM" id="CLU_001265_61_1_6"/>
<dbReference type="OrthoDB" id="9788453at2"/>
<dbReference type="Proteomes" id="UP000001726">
    <property type="component" value="Chromosome"/>
</dbReference>
<dbReference type="GO" id="GO:0005886">
    <property type="term" value="C:plasma membrane"/>
    <property type="evidence" value="ECO:0007669"/>
    <property type="project" value="UniProtKB-SubCell"/>
</dbReference>
<dbReference type="GO" id="GO:0015144">
    <property type="term" value="F:carbohydrate transmembrane transporter activity"/>
    <property type="evidence" value="ECO:0007669"/>
    <property type="project" value="UniProtKB-UniRule"/>
</dbReference>
<dbReference type="CDD" id="cd17324">
    <property type="entry name" value="MFS_NepI_like"/>
    <property type="match status" value="1"/>
</dbReference>
<dbReference type="Gene3D" id="1.20.1250.20">
    <property type="entry name" value="MFS general substrate transporter like domains"/>
    <property type="match status" value="1"/>
</dbReference>
<dbReference type="HAMAP" id="MF_00517">
    <property type="entry name" value="MFS_SotB"/>
    <property type="match status" value="1"/>
</dbReference>
<dbReference type="InterPro" id="IPR011701">
    <property type="entry name" value="MFS"/>
</dbReference>
<dbReference type="InterPro" id="IPR020846">
    <property type="entry name" value="MFS_dom"/>
</dbReference>
<dbReference type="InterPro" id="IPR050189">
    <property type="entry name" value="MFS_Efflux_Transporters"/>
</dbReference>
<dbReference type="InterPro" id="IPR036259">
    <property type="entry name" value="MFS_trans_sf"/>
</dbReference>
<dbReference type="InterPro" id="IPR023495">
    <property type="entry name" value="Sugar_effux_transptr_put"/>
</dbReference>
<dbReference type="NCBIfam" id="NF002921">
    <property type="entry name" value="PRK03545.1"/>
    <property type="match status" value="1"/>
</dbReference>
<dbReference type="PANTHER" id="PTHR43124">
    <property type="entry name" value="PURINE EFFLUX PUMP PBUE"/>
    <property type="match status" value="1"/>
</dbReference>
<dbReference type="PANTHER" id="PTHR43124:SF4">
    <property type="entry name" value="SUGAR EFFLUX TRANSPORTER"/>
    <property type="match status" value="1"/>
</dbReference>
<dbReference type="Pfam" id="PF07690">
    <property type="entry name" value="MFS_1"/>
    <property type="match status" value="1"/>
</dbReference>
<dbReference type="SUPFAM" id="SSF103473">
    <property type="entry name" value="MFS general substrate transporter"/>
    <property type="match status" value="1"/>
</dbReference>
<dbReference type="PROSITE" id="PS50850">
    <property type="entry name" value="MFS"/>
    <property type="match status" value="1"/>
</dbReference>
<accession>B2VKI2</accession>
<proteinExistence type="inferred from homology"/>
<organism>
    <name type="scientific">Erwinia tasmaniensis (strain DSM 17950 / CFBP 7177 / CIP 109463 / NCPPB 4357 / Et1/99)</name>
    <dbReference type="NCBI Taxonomy" id="465817"/>
    <lineage>
        <taxon>Bacteria</taxon>
        <taxon>Pseudomonadati</taxon>
        <taxon>Pseudomonadota</taxon>
        <taxon>Gammaproteobacteria</taxon>
        <taxon>Enterobacterales</taxon>
        <taxon>Erwiniaceae</taxon>
        <taxon>Erwinia</taxon>
    </lineage>
</organism>